<proteinExistence type="evidence at transcript level"/>
<evidence type="ECO:0000250" key="1"/>
<evidence type="ECO:0000250" key="2">
    <source>
        <dbReference type="UniProtKB" id="Q922Q1"/>
    </source>
</evidence>
<evidence type="ECO:0000250" key="3">
    <source>
        <dbReference type="UniProtKB" id="Q969Z3"/>
    </source>
</evidence>
<evidence type="ECO:0000255" key="4"/>
<evidence type="ECO:0000255" key="5">
    <source>
        <dbReference type="PROSITE-ProRule" id="PRU00670"/>
    </source>
</evidence>
<sequence>MGSSSSTALARLGLPGQPRSTWLGVAALGLAAVALGTVAWRRARPRRRRQLQQVGTVSKVWIYPIKSCKGVSVCETECTDMGLRCGKVRDRFWMVVKEDGHMITARQEPRLVLVTITLENNYLMLEAPGMEPIVLPIKLPSSNKIHDCRLFGLDIKGRDCGDEVARWFTSYLKTQAYRLVQFDTKMKGRTTKKLYPSESYLQNYEVAYPDCSPIHLISEASLVDLNTRLQKKVKMEYFRPNIVVSGCEAFEEDTWDELLIGDVEMKRVLSCPRCVLTTVDPDTGIIDRKEPLETLKSYRLCDPSVKSLYQSSPLFGMYFSVEKIGSLRVGDPVYRMVD</sequence>
<keyword id="KW-0007">Acetylation</keyword>
<keyword id="KW-1017">Isopeptide bond</keyword>
<keyword id="KW-0472">Membrane</keyword>
<keyword id="KW-0496">Mitochondrion</keyword>
<keyword id="KW-1000">Mitochondrion outer membrane</keyword>
<keyword id="KW-0500">Molybdenum</keyword>
<keyword id="KW-0560">Oxidoreductase</keyword>
<keyword id="KW-0576">Peroxisome</keyword>
<keyword id="KW-1185">Reference proteome</keyword>
<keyword id="KW-0809">Transit peptide</keyword>
<keyword id="KW-0832">Ubl conjugation</keyword>
<organism>
    <name type="scientific">Rattus norvegicus</name>
    <name type="common">Rat</name>
    <dbReference type="NCBI Taxonomy" id="10116"/>
    <lineage>
        <taxon>Eukaryota</taxon>
        <taxon>Metazoa</taxon>
        <taxon>Chordata</taxon>
        <taxon>Craniata</taxon>
        <taxon>Vertebrata</taxon>
        <taxon>Euteleostomi</taxon>
        <taxon>Mammalia</taxon>
        <taxon>Eutheria</taxon>
        <taxon>Euarchontoglires</taxon>
        <taxon>Glires</taxon>
        <taxon>Rodentia</taxon>
        <taxon>Myomorpha</taxon>
        <taxon>Muroidea</taxon>
        <taxon>Muridae</taxon>
        <taxon>Murinae</taxon>
        <taxon>Rattus</taxon>
    </lineage>
</organism>
<comment type="function">
    <text evidence="3">Catalyzes the reduction of N-oxygenated molecules, acting as a counterpart of cytochrome P450 and flavin-containing monooxygenases in metabolic cycles. As a component of prodrug-converting system, reduces a multitude of N-hydroxylated prodrugs particularly amidoximes, leading to increased drug bioavailability. May be involved in mitochondrial N(omega)-hydroxy-L-arginine (NOHA) reduction, regulating endogenous nitric oxide levels and biosynthesis. Postulated to cleave the N-OH bond of N-hydroxylated substrates in concert with electron transfer from NADH to cytochrome b5 reductase then to cytochrome b5, the ultimate electron donor that primes the active site for substrate reduction.</text>
</comment>
<comment type="catalytic activity">
    <reaction evidence="3">
        <text>N(omega)-hydroxy-L-arginine + 2 Fe(II)-[cytochrome b5] + 2 H(+) = L-arginine + 2 Fe(III)-[cytochrome b5] + H2O</text>
        <dbReference type="Rhea" id="RHEA:61644"/>
        <dbReference type="Rhea" id="RHEA-COMP:10438"/>
        <dbReference type="Rhea" id="RHEA-COMP:10439"/>
        <dbReference type="ChEBI" id="CHEBI:15377"/>
        <dbReference type="ChEBI" id="CHEBI:15378"/>
        <dbReference type="ChEBI" id="CHEBI:29033"/>
        <dbReference type="ChEBI" id="CHEBI:29034"/>
        <dbReference type="ChEBI" id="CHEBI:32682"/>
        <dbReference type="ChEBI" id="CHEBI:60107"/>
    </reaction>
    <physiologicalReaction direction="left-to-right" evidence="3">
        <dbReference type="Rhea" id="RHEA:61645"/>
    </physiologicalReaction>
</comment>
<comment type="cofactor">
    <cofactor evidence="1">
        <name>Mo-molybdopterin</name>
        <dbReference type="ChEBI" id="CHEBI:71302"/>
    </cofactor>
    <text evidence="1">Binds 1 Mo-molybdopterin (Mo-MPT) cofactor per subunit.</text>
</comment>
<comment type="subunit">
    <text evidence="1">Component of a complex composed of cytochrome b5, NADH-cytochrome b5 reductase (CYB5R3) and MTARC2.</text>
</comment>
<comment type="subcellular location">
    <subcellularLocation>
        <location evidence="1">Mitochondrion outer membrane</location>
        <topology evidence="1">Peripheral membrane protein</topology>
    </subcellularLocation>
    <subcellularLocation>
        <location evidence="1">Peroxisome</location>
    </subcellularLocation>
</comment>
<comment type="PTM">
    <text evidence="3">Ubiquitinated by PRKN during mitophagy, leading to its degradation and enhancement of mitophagy. Deubiquitinated by USP30.</text>
</comment>
<dbReference type="EC" id="1.7.-.-"/>
<dbReference type="EMBL" id="AF095741">
    <property type="protein sequence ID" value="AAC64190.1"/>
    <property type="molecule type" value="mRNA"/>
</dbReference>
<dbReference type="EMBL" id="BC061734">
    <property type="protein sequence ID" value="AAH61734.1"/>
    <property type="molecule type" value="mRNA"/>
</dbReference>
<dbReference type="RefSeq" id="NP_599237.1">
    <property type="nucleotide sequence ID" value="NM_134410.2"/>
</dbReference>
<dbReference type="SMR" id="O88994"/>
<dbReference type="FunCoup" id="O88994">
    <property type="interactions" value="148"/>
</dbReference>
<dbReference type="STRING" id="10116.ENSRNOP00000034963"/>
<dbReference type="iPTMnet" id="O88994"/>
<dbReference type="PhosphoSitePlus" id="O88994"/>
<dbReference type="SwissPalm" id="O88994"/>
<dbReference type="jPOST" id="O88994"/>
<dbReference type="PaxDb" id="10116-ENSRNOP00000034963"/>
<dbReference type="GeneID" id="171451"/>
<dbReference type="KEGG" id="rno:171451"/>
<dbReference type="UCSC" id="RGD:621257">
    <property type="organism name" value="rat"/>
</dbReference>
<dbReference type="AGR" id="RGD:621257"/>
<dbReference type="CTD" id="54996"/>
<dbReference type="RGD" id="621257">
    <property type="gene designation" value="Mtarc2"/>
</dbReference>
<dbReference type="eggNOG" id="KOG2362">
    <property type="taxonomic scope" value="Eukaryota"/>
</dbReference>
<dbReference type="InParanoid" id="O88994"/>
<dbReference type="OrthoDB" id="17255at2759"/>
<dbReference type="PhylomeDB" id="O88994"/>
<dbReference type="Reactome" id="R-RNO-211945">
    <property type="pathway name" value="Phase I - Functionalization of compounds"/>
</dbReference>
<dbReference type="PRO" id="PR:O88994"/>
<dbReference type="Proteomes" id="UP000002494">
    <property type="component" value="Unplaced"/>
</dbReference>
<dbReference type="GO" id="GO:0005741">
    <property type="term" value="C:mitochondrial outer membrane"/>
    <property type="evidence" value="ECO:0007669"/>
    <property type="project" value="UniProtKB-SubCell"/>
</dbReference>
<dbReference type="GO" id="GO:0005739">
    <property type="term" value="C:mitochondrion"/>
    <property type="evidence" value="ECO:0000250"/>
    <property type="project" value="UniProtKB"/>
</dbReference>
<dbReference type="GO" id="GO:0005777">
    <property type="term" value="C:peroxisome"/>
    <property type="evidence" value="ECO:0007669"/>
    <property type="project" value="UniProtKB-SubCell"/>
</dbReference>
<dbReference type="GO" id="GO:0030151">
    <property type="term" value="F:molybdenum ion binding"/>
    <property type="evidence" value="ECO:0000266"/>
    <property type="project" value="RGD"/>
</dbReference>
<dbReference type="GO" id="GO:0043546">
    <property type="term" value="F:molybdopterin cofactor binding"/>
    <property type="evidence" value="ECO:0000266"/>
    <property type="project" value="RGD"/>
</dbReference>
<dbReference type="GO" id="GO:0008940">
    <property type="term" value="F:nitrate reductase activity"/>
    <property type="evidence" value="ECO:0000266"/>
    <property type="project" value="RGD"/>
</dbReference>
<dbReference type="GO" id="GO:0098809">
    <property type="term" value="F:nitrite reductase activity"/>
    <property type="evidence" value="ECO:0000266"/>
    <property type="project" value="RGD"/>
</dbReference>
<dbReference type="GO" id="GO:0016661">
    <property type="term" value="F:oxidoreductase activity, acting on other nitrogenous compounds as donors"/>
    <property type="evidence" value="ECO:0000266"/>
    <property type="project" value="RGD"/>
</dbReference>
<dbReference type="GO" id="GO:0030170">
    <property type="term" value="F:pyridoxal phosphate binding"/>
    <property type="evidence" value="ECO:0007669"/>
    <property type="project" value="InterPro"/>
</dbReference>
<dbReference type="GO" id="GO:0070458">
    <property type="term" value="P:cellular detoxification of nitrogen compound"/>
    <property type="evidence" value="ECO:0000266"/>
    <property type="project" value="RGD"/>
</dbReference>
<dbReference type="GO" id="GO:0042126">
    <property type="term" value="P:nitrate metabolic process"/>
    <property type="evidence" value="ECO:0000266"/>
    <property type="project" value="RGD"/>
</dbReference>
<dbReference type="GO" id="GO:0006809">
    <property type="term" value="P:nitric oxide biosynthetic process"/>
    <property type="evidence" value="ECO:0000266"/>
    <property type="project" value="RGD"/>
</dbReference>
<dbReference type="InterPro" id="IPR005302">
    <property type="entry name" value="MoCF_Sase_C"/>
</dbReference>
<dbReference type="InterPro" id="IPR005303">
    <property type="entry name" value="MOCOS_middle"/>
</dbReference>
<dbReference type="InterPro" id="IPR011037">
    <property type="entry name" value="Pyrv_Knase-like_insert_dom_sf"/>
</dbReference>
<dbReference type="PANTHER" id="PTHR14237:SF27">
    <property type="entry name" value="MITOCHONDRIAL AMIDOXIME REDUCING COMPONENT 2"/>
    <property type="match status" value="1"/>
</dbReference>
<dbReference type="PANTHER" id="PTHR14237">
    <property type="entry name" value="MOLYBDOPTERIN COFACTOR SULFURASE MOSC"/>
    <property type="match status" value="1"/>
</dbReference>
<dbReference type="Pfam" id="PF03473">
    <property type="entry name" value="MOSC"/>
    <property type="match status" value="1"/>
</dbReference>
<dbReference type="Pfam" id="PF03476">
    <property type="entry name" value="MOSC_N"/>
    <property type="match status" value="1"/>
</dbReference>
<dbReference type="SUPFAM" id="SSF141673">
    <property type="entry name" value="MOSC N-terminal domain-like"/>
    <property type="match status" value="1"/>
</dbReference>
<dbReference type="SUPFAM" id="SSF50800">
    <property type="entry name" value="PK beta-barrel domain-like"/>
    <property type="match status" value="1"/>
</dbReference>
<dbReference type="PROSITE" id="PS51340">
    <property type="entry name" value="MOSC"/>
    <property type="match status" value="1"/>
</dbReference>
<gene>
    <name type="primary">Mtarc2</name>
    <name type="synonym">Marc2</name>
    <name type="synonym">Mg87</name>
    <name type="synonym">Mosc2</name>
</gene>
<accession>O88994</accession>
<reference key="1">
    <citation type="submission" date="1998-09" db="EMBL/GenBank/DDBJ databases">
        <title>Isolation of a novel gene, MG87, from the diabetic kidney.</title>
        <authorList>
            <person name="Page R.A."/>
        </authorList>
    </citation>
    <scope>NUCLEOTIDE SEQUENCE [MRNA]</scope>
    <source>
        <strain>GK</strain>
        <tissue>Kidney</tissue>
    </source>
</reference>
<reference key="2">
    <citation type="journal article" date="2004" name="Genome Res.">
        <title>The status, quality, and expansion of the NIH full-length cDNA project: the Mammalian Gene Collection (MGC).</title>
        <authorList>
            <consortium name="The MGC Project Team"/>
        </authorList>
    </citation>
    <scope>NUCLEOTIDE SEQUENCE [LARGE SCALE MRNA]</scope>
    <source>
        <tissue>Prostate</tissue>
    </source>
</reference>
<protein>
    <recommendedName>
        <fullName>Mitochondrial amidoxime reducing component 2</fullName>
        <shortName>mARC2</shortName>
        <ecNumber>1.7.-.-</ecNumber>
    </recommendedName>
    <alternativeName>
        <fullName>Molybdenum cofactor sulfurase C-terminal domain-containing protein 2</fullName>
        <shortName>MOSC domain-containing protein 2</shortName>
        <shortName>Moco sulfurase C-terminal domain-containing protein 2</shortName>
    </alternativeName>
</protein>
<name>MARC2_RAT</name>
<feature type="transit peptide" description="Mitochondrion" evidence="4">
    <location>
        <begin position="1"/>
        <end position="35"/>
    </location>
</feature>
<feature type="chain" id="PRO_0000273344" description="Mitochondrial amidoxime reducing component 2">
    <location>
        <begin position="36"/>
        <end position="338"/>
    </location>
</feature>
<feature type="domain" description="MOSC" evidence="5">
    <location>
        <begin position="188"/>
        <end position="336"/>
    </location>
</feature>
<feature type="modified residue" description="N6-acetyllysine; alternate" evidence="2">
    <location>
        <position position="156"/>
    </location>
</feature>
<feature type="cross-link" description="Glycyl lysine isopeptide (Lys-Gly) (interchain with G-Cter in ubiquitin)" evidence="3">
    <location>
        <position position="59"/>
    </location>
</feature>
<feature type="cross-link" description="Glycyl lysine isopeptide (Lys-Gly) (interchain with G-Cter in ubiquitin)" evidence="3">
    <location>
        <position position="138"/>
    </location>
</feature>
<feature type="cross-link" description="Glycyl lysine isopeptide (Lys-Gly) (interchain with G-Cter in ubiquitin)" evidence="3">
    <location>
        <position position="144"/>
    </location>
</feature>
<feature type="cross-link" description="Glycyl lysine isopeptide (Lys-Gly) (interchain with G-Cter in ubiquitin); alternate" evidence="3">
    <location>
        <position position="156"/>
    </location>
</feature>
<feature type="cross-link" description="Glycyl lysine isopeptide (Lys-Gly) (interchain with G-Cter in ubiquitin)" evidence="3">
    <location>
        <position position="173"/>
    </location>
</feature>
<feature type="cross-link" description="Glycyl lysine isopeptide (Lys-Gly) (interchain with G-Cter in ubiquitin)" evidence="3">
    <location>
        <position position="187"/>
    </location>
</feature>
<feature type="cross-link" description="Glycyl lysine isopeptide (Lys-Gly) (interchain with G-Cter in ubiquitin)" evidence="3">
    <location>
        <position position="289"/>
    </location>
</feature>
<feature type="cross-link" description="Glycyl lysine isopeptide (Lys-Gly) (interchain with G-Cter in ubiquitin)" evidence="3">
    <location>
        <position position="296"/>
    </location>
</feature>